<sequence length="115" mass="12250">MHEMGIAMQIVEIAGGAIPSGIENPSVAKVNIRVGKLTAVVPTSLTFCFNIATQDTPLAGAELVIEEVPVVARCKQCGHEWIITGPDFSCETCRAGEVDILSGRELDIVSIELKE</sequence>
<name>HYPA_DESOH</name>
<dbReference type="EMBL" id="CP000859">
    <property type="protein sequence ID" value="ABW67321.1"/>
    <property type="molecule type" value="Genomic_DNA"/>
</dbReference>
<dbReference type="RefSeq" id="WP_012174937.1">
    <property type="nucleotide sequence ID" value="NC_009943.1"/>
</dbReference>
<dbReference type="SMR" id="A8ZZG8"/>
<dbReference type="STRING" id="96561.Dole_1517"/>
<dbReference type="KEGG" id="dol:Dole_1517"/>
<dbReference type="eggNOG" id="COG0375">
    <property type="taxonomic scope" value="Bacteria"/>
</dbReference>
<dbReference type="HOGENOM" id="CLU_126929_3_0_7"/>
<dbReference type="OrthoDB" id="9800361at2"/>
<dbReference type="Proteomes" id="UP000008561">
    <property type="component" value="Chromosome"/>
</dbReference>
<dbReference type="GO" id="GO:0016151">
    <property type="term" value="F:nickel cation binding"/>
    <property type="evidence" value="ECO:0007669"/>
    <property type="project" value="UniProtKB-UniRule"/>
</dbReference>
<dbReference type="GO" id="GO:0008270">
    <property type="term" value="F:zinc ion binding"/>
    <property type="evidence" value="ECO:0007669"/>
    <property type="project" value="UniProtKB-UniRule"/>
</dbReference>
<dbReference type="GO" id="GO:0051604">
    <property type="term" value="P:protein maturation"/>
    <property type="evidence" value="ECO:0007669"/>
    <property type="project" value="InterPro"/>
</dbReference>
<dbReference type="GO" id="GO:0036211">
    <property type="term" value="P:protein modification process"/>
    <property type="evidence" value="ECO:0007669"/>
    <property type="project" value="UniProtKB-UniRule"/>
</dbReference>
<dbReference type="Gene3D" id="3.30.2320.80">
    <property type="match status" value="1"/>
</dbReference>
<dbReference type="HAMAP" id="MF_00213">
    <property type="entry name" value="HypA_HybF"/>
    <property type="match status" value="1"/>
</dbReference>
<dbReference type="InterPro" id="IPR020538">
    <property type="entry name" value="Hydgase_Ni_incorp_HypA/HybF_CS"/>
</dbReference>
<dbReference type="InterPro" id="IPR000688">
    <property type="entry name" value="HypA/HybF"/>
</dbReference>
<dbReference type="NCBIfam" id="TIGR00100">
    <property type="entry name" value="hypA"/>
    <property type="match status" value="1"/>
</dbReference>
<dbReference type="PANTHER" id="PTHR34535">
    <property type="entry name" value="HYDROGENASE MATURATION FACTOR HYPA"/>
    <property type="match status" value="1"/>
</dbReference>
<dbReference type="PANTHER" id="PTHR34535:SF3">
    <property type="entry name" value="HYDROGENASE MATURATION FACTOR HYPA"/>
    <property type="match status" value="1"/>
</dbReference>
<dbReference type="Pfam" id="PF01155">
    <property type="entry name" value="HypA"/>
    <property type="match status" value="1"/>
</dbReference>
<dbReference type="PIRSF" id="PIRSF004761">
    <property type="entry name" value="Hydrgn_mat_HypA"/>
    <property type="match status" value="1"/>
</dbReference>
<dbReference type="PROSITE" id="PS01249">
    <property type="entry name" value="HYPA"/>
    <property type="match status" value="1"/>
</dbReference>
<comment type="function">
    <text evidence="1">Involved in the maturation of [NiFe] hydrogenases. Required for nickel insertion into the metal center of the hydrogenase.</text>
</comment>
<comment type="similarity">
    <text evidence="1">Belongs to the HypA/HybF family.</text>
</comment>
<accession>A8ZZG8</accession>
<gene>
    <name evidence="1" type="primary">hypA</name>
    <name type="ordered locus">Dole_1517</name>
</gene>
<organism>
    <name type="scientific">Desulfosudis oleivorans (strain DSM 6200 / JCM 39069 / Hxd3)</name>
    <name type="common">Desulfococcus oleovorans</name>
    <dbReference type="NCBI Taxonomy" id="96561"/>
    <lineage>
        <taxon>Bacteria</taxon>
        <taxon>Pseudomonadati</taxon>
        <taxon>Thermodesulfobacteriota</taxon>
        <taxon>Desulfobacteria</taxon>
        <taxon>Desulfobacterales</taxon>
        <taxon>Desulfosudaceae</taxon>
        <taxon>Desulfosudis</taxon>
    </lineage>
</organism>
<keyword id="KW-0479">Metal-binding</keyword>
<keyword id="KW-0533">Nickel</keyword>
<keyword id="KW-1185">Reference proteome</keyword>
<keyword id="KW-0862">Zinc</keyword>
<protein>
    <recommendedName>
        <fullName evidence="1">Hydrogenase maturation factor HypA</fullName>
    </recommendedName>
</protein>
<proteinExistence type="inferred from homology"/>
<feature type="chain" id="PRO_1000099891" description="Hydrogenase maturation factor HypA">
    <location>
        <begin position="1"/>
        <end position="115"/>
    </location>
</feature>
<feature type="binding site" evidence="1">
    <location>
        <position position="2"/>
    </location>
    <ligand>
        <name>Ni(2+)</name>
        <dbReference type="ChEBI" id="CHEBI:49786"/>
    </ligand>
</feature>
<feature type="binding site" evidence="1">
    <location>
        <position position="74"/>
    </location>
    <ligand>
        <name>Zn(2+)</name>
        <dbReference type="ChEBI" id="CHEBI:29105"/>
    </ligand>
</feature>
<feature type="binding site" evidence="1">
    <location>
        <position position="77"/>
    </location>
    <ligand>
        <name>Zn(2+)</name>
        <dbReference type="ChEBI" id="CHEBI:29105"/>
    </ligand>
</feature>
<feature type="binding site" evidence="1">
    <location>
        <position position="90"/>
    </location>
    <ligand>
        <name>Zn(2+)</name>
        <dbReference type="ChEBI" id="CHEBI:29105"/>
    </ligand>
</feature>
<feature type="binding site" evidence="1">
    <location>
        <position position="93"/>
    </location>
    <ligand>
        <name>Zn(2+)</name>
        <dbReference type="ChEBI" id="CHEBI:29105"/>
    </ligand>
</feature>
<evidence type="ECO:0000255" key="1">
    <source>
        <dbReference type="HAMAP-Rule" id="MF_00213"/>
    </source>
</evidence>
<reference key="1">
    <citation type="submission" date="2007-10" db="EMBL/GenBank/DDBJ databases">
        <title>Complete sequence of Desulfococcus oleovorans Hxd3.</title>
        <authorList>
            <consortium name="US DOE Joint Genome Institute"/>
            <person name="Copeland A."/>
            <person name="Lucas S."/>
            <person name="Lapidus A."/>
            <person name="Barry K."/>
            <person name="Glavina del Rio T."/>
            <person name="Dalin E."/>
            <person name="Tice H."/>
            <person name="Pitluck S."/>
            <person name="Kiss H."/>
            <person name="Brettin T."/>
            <person name="Bruce D."/>
            <person name="Detter J.C."/>
            <person name="Han C."/>
            <person name="Schmutz J."/>
            <person name="Larimer F."/>
            <person name="Land M."/>
            <person name="Hauser L."/>
            <person name="Kyrpides N."/>
            <person name="Kim E."/>
            <person name="Wawrik B."/>
            <person name="Richardson P."/>
        </authorList>
    </citation>
    <scope>NUCLEOTIDE SEQUENCE [LARGE SCALE GENOMIC DNA]</scope>
    <source>
        <strain>DSM 6200 / JCM 39069 / Hxd3</strain>
    </source>
</reference>